<keyword id="KW-0014">AIDS</keyword>
<keyword id="KW-1035">Host cytoplasm</keyword>
<keyword id="KW-1048">Host nucleus</keyword>
<keyword id="KW-0509">mRNA transport</keyword>
<keyword id="KW-1185">Reference proteome</keyword>
<keyword id="KW-0694">RNA-binding</keyword>
<keyword id="KW-0813">Transport</keyword>
<protein>
    <recommendedName>
        <fullName>Protein Rev</fullName>
    </recommendedName>
    <alternativeName>
        <fullName>Regulator of expression of viral proteins</fullName>
    </alternativeName>
</protein>
<organism>
    <name type="scientific">Human immunodeficiency virus type 2 subtype A (isolate BEN)</name>
    <name type="common">HIV-2</name>
    <dbReference type="NCBI Taxonomy" id="11714"/>
    <lineage>
        <taxon>Viruses</taxon>
        <taxon>Riboviria</taxon>
        <taxon>Pararnavirae</taxon>
        <taxon>Artverviricota</taxon>
        <taxon>Revtraviricetes</taxon>
        <taxon>Ortervirales</taxon>
        <taxon>Retroviridae</taxon>
        <taxon>Orthoretrovirinae</taxon>
        <taxon>Lentivirus</taxon>
        <taxon>Human immunodeficiency virus 2</taxon>
    </lineage>
</organism>
<feature type="chain" id="PRO_0000085282" description="Protein Rev">
    <location>
        <begin position="1"/>
        <end position="103"/>
    </location>
</feature>
<feature type="region of interest" description="Homomultimerization" evidence="1">
    <location>
        <begin position="16"/>
        <end position="24"/>
    </location>
</feature>
<feature type="region of interest" description="Disordered" evidence="2">
    <location>
        <begin position="19"/>
        <end position="42"/>
    </location>
</feature>
<feature type="region of interest" description="Disordered" evidence="2">
    <location>
        <begin position="80"/>
        <end position="103"/>
    </location>
</feature>
<feature type="short sequence motif" description="Nuclear localization signal and RNA-binding (RRE)" evidence="1">
    <location>
        <begin position="35"/>
        <end position="49"/>
    </location>
</feature>
<feature type="short sequence motif" description="Nuclear export signal and binding to XPO1" evidence="1">
    <location>
        <begin position="71"/>
        <end position="82"/>
    </location>
</feature>
<feature type="compositionally biased region" description="Polar residues" evidence="2">
    <location>
        <begin position="21"/>
        <end position="35"/>
    </location>
</feature>
<feature type="compositionally biased region" description="Polar residues" evidence="2">
    <location>
        <begin position="92"/>
        <end position="103"/>
    </location>
</feature>
<reference key="1">
    <citation type="journal article" date="1990" name="Virology">
        <title>A novel proviral clone of HIV-2: biological and phylogenetic relationship to other primate immunodeficiency viruses.</title>
        <authorList>
            <person name="Kirchhoff F."/>
            <person name="Jentsch K."/>
            <person name="Bachmann B."/>
            <person name="Stuke A."/>
            <person name="Laloux C."/>
            <person name="Lueke W."/>
            <person name="Stahl-Henning C."/>
            <person name="Schneider J."/>
            <person name="Nieselt K."/>
            <person name="Eigen M."/>
            <person name="Hunsmann G."/>
        </authorList>
    </citation>
    <scope>NUCLEOTIDE SEQUENCE [GENOMIC DNA]</scope>
</reference>
<proteinExistence type="inferred from homology"/>
<gene>
    <name type="primary">rev</name>
</gene>
<dbReference type="EMBL" id="M30502">
    <property type="protein sequence ID" value="AAB00742.1"/>
    <property type="molecule type" value="Genomic_DNA"/>
</dbReference>
<dbReference type="RefSeq" id="NP_056843.1">
    <property type="nucleotide sequence ID" value="NC_001722.1"/>
</dbReference>
<dbReference type="SMR" id="P18093"/>
<dbReference type="KEGG" id="vg:1724716"/>
<dbReference type="Proteomes" id="UP000002242">
    <property type="component" value="Segment"/>
</dbReference>
<dbReference type="GO" id="GO:0030430">
    <property type="term" value="C:host cell cytoplasm"/>
    <property type="evidence" value="ECO:0007669"/>
    <property type="project" value="UniProtKB-SubCell"/>
</dbReference>
<dbReference type="GO" id="GO:0044196">
    <property type="term" value="C:host cell nucleolus"/>
    <property type="evidence" value="ECO:0007669"/>
    <property type="project" value="UniProtKB-SubCell"/>
</dbReference>
<dbReference type="GO" id="GO:0003700">
    <property type="term" value="F:DNA-binding transcription factor activity"/>
    <property type="evidence" value="ECO:0007669"/>
    <property type="project" value="InterPro"/>
</dbReference>
<dbReference type="GO" id="GO:0003723">
    <property type="term" value="F:RNA binding"/>
    <property type="evidence" value="ECO:0007669"/>
    <property type="project" value="UniProtKB-KW"/>
</dbReference>
<dbReference type="GO" id="GO:0051028">
    <property type="term" value="P:mRNA transport"/>
    <property type="evidence" value="ECO:0007669"/>
    <property type="project" value="UniProtKB-KW"/>
</dbReference>
<dbReference type="Gene3D" id="6.10.140.630">
    <property type="match status" value="1"/>
</dbReference>
<dbReference type="InterPro" id="IPR000625">
    <property type="entry name" value="REV_protein"/>
</dbReference>
<dbReference type="Pfam" id="PF00424">
    <property type="entry name" value="REV"/>
    <property type="match status" value="1"/>
</dbReference>
<name>REV_HV2BE</name>
<accession>P18093</accession>
<comment type="function">
    <text evidence="1">Escorts unspliced or incompletely spliced viral pre-mRNAs (late transcripts) out of the nucleus of infected cells. These pre-mRNAs carry a recognition sequence called Rev responsive element (RRE) located in the env gene, that is not present in fully spliced viral mRNAs (early transcripts). This function is essential since most viral proteins are translated from unspliced or partially spliced pre-mRNAs which cannot exit the nucleus by the pathway used by fully processed cellular mRNAs (By similarity).</text>
</comment>
<comment type="subunit">
    <text evidence="1">Homomultimer; when bound to the RRE. Multimeric assembly is essential for activity (By similarity).</text>
</comment>
<comment type="subcellular location">
    <subcellularLocation>
        <location>Host nucleus</location>
        <location>Host nucleolus</location>
    </subcellularLocation>
    <subcellularLocation>
        <location>Host cytoplasm</location>
    </subcellularLocation>
    <text evidence="1">The presence of both nuclear import and nuclear export signals leads to continuous shuttling between the nucleus and cytoplasm.</text>
</comment>
<comment type="domain">
    <text evidence="1">The RNA-binding motif binds to the RRE, a stem-and-loop structure present in incompletely spliced viral pre-mRNAs. This region also contains the NLS which mediates nuclear localization. These overlapping functions prevent Rev bound to RRE from undesirable return to the nucleus. When Rev binds the RRE, the NLS becomes masked while the NES remains accessible (By similarity).</text>
</comment>
<comment type="miscellaneous">
    <text>This isolate is from a German AIDS patient (with predominantly neurological complications) who was probably infected in Mali.</text>
</comment>
<sequence length="103" mass="11792">MSERADEEGLQGKLRLLRLLHQTNPYPQGPGTASQRRNRRRRRRRQWLRLVALANKLCAVPDPPTDSPLDRAIQHLQRLTIQELPDPPTDLPESNSNQGLAET</sequence>
<organismHost>
    <name type="scientific">Homo sapiens</name>
    <name type="common">Human</name>
    <dbReference type="NCBI Taxonomy" id="9606"/>
</organismHost>
<evidence type="ECO:0000250" key="1"/>
<evidence type="ECO:0000256" key="2">
    <source>
        <dbReference type="SAM" id="MobiDB-lite"/>
    </source>
</evidence>